<comment type="function">
    <text evidence="2 3 4 7">SNARE required for targeting and fusion of Golgi-derived retrograde transport vesicles with the ER.</text>
</comment>
<comment type="subunit">
    <text evidence="3">Component of a SNARE complex consisting of UFE1, USE1, SEC20 and SEC22 or YKT6.</text>
</comment>
<comment type="interaction">
    <interactant intactId="EBI-23881">
        <id>P53146</id>
    </interactant>
    <interactant intactId="EBI-16572">
        <id>P28791</id>
        <label>SEC20</label>
    </interactant>
    <organismsDiffer>false</organismsDiffer>
    <experiments>5</experiments>
</comment>
<comment type="interaction">
    <interactant intactId="EBI-23881">
        <id>P53146</id>
    </interactant>
    <interactant intactId="EBI-31898">
        <id>Q12745</id>
        <label>SEC39</label>
    </interactant>
    <organismsDiffer>false</organismsDiffer>
    <experiments>5</experiments>
</comment>
<comment type="interaction">
    <interactant intactId="EBI-23881">
        <id>P53146</id>
    </interactant>
    <interactant intactId="EBI-20016">
        <id>P41834</id>
        <label>UFE1</label>
    </interactant>
    <organismsDiffer>false</organismsDiffer>
    <experiments>3</experiments>
</comment>
<comment type="subcellular location">
    <subcellularLocation>
        <location evidence="2 3 5">Endoplasmic reticulum membrane</location>
        <topology evidence="2 3 5">Single-pass type IV membrane protein</topology>
    </subcellularLocation>
</comment>
<comment type="miscellaneous">
    <text evidence="6">Present with 937 molecules/cell in log phase SD medium.</text>
</comment>
<comment type="similarity">
    <text evidence="8">Belongs to the USE1 family.</text>
</comment>
<proteinExistence type="evidence at protein level"/>
<name>USE1_YEAST</name>
<feature type="chain" id="PRO_0000215584" description="Protein transport protein USE1">
    <location>
        <begin position="1"/>
        <end position="245"/>
    </location>
</feature>
<feature type="topological domain" description="Cytoplasmic" evidence="1">
    <location>
        <begin position="1"/>
        <end position="218"/>
    </location>
</feature>
<feature type="transmembrane region" description="Helical; Anchor for type IV membrane protein" evidence="1">
    <location>
        <begin position="219"/>
        <end position="239"/>
    </location>
</feature>
<feature type="topological domain" description="Lumenal" evidence="1">
    <location>
        <begin position="240"/>
        <end position="245"/>
    </location>
</feature>
<feature type="mutagenesis site" description="In USE1-0; slows down protein transport from the endoplasmic reticulum to the Golgi at 37 degrees Celsius." evidence="2">
    <original>D</original>
    <variation>G</variation>
    <location>
        <position position="183"/>
    </location>
</feature>
<sequence>MAETSNDPFLSYVLSSKQLTNLNRLRRKAVTKQLGSSDDNKVSEEFLRYQHTYQREAFEYLQTKHDAHKIMESQYEQYQSSSKTRRYSIDLDSVDAVDTESQTEYPNEEFIDRNEDSEAVMELRKRLLGKGQNKGLGYETTKSVDRQIEDQDTLQQDLIQDMSKLVGSLKQGAVAFQSALDEDKQVLGAAEIGIQVASQGLMDVSGKLRKYDKSKLSYLFYITVFIFMILGLVFTFIIIQLFPAL</sequence>
<organism>
    <name type="scientific">Saccharomyces cerevisiae (strain ATCC 204508 / S288c)</name>
    <name type="common">Baker's yeast</name>
    <dbReference type="NCBI Taxonomy" id="559292"/>
    <lineage>
        <taxon>Eukaryota</taxon>
        <taxon>Fungi</taxon>
        <taxon>Dikarya</taxon>
        <taxon>Ascomycota</taxon>
        <taxon>Saccharomycotina</taxon>
        <taxon>Saccharomycetes</taxon>
        <taxon>Saccharomycetales</taxon>
        <taxon>Saccharomycetaceae</taxon>
        <taxon>Saccharomyces</taxon>
    </lineage>
</organism>
<protein>
    <recommendedName>
        <fullName>Protein transport protein USE1</fullName>
    </recommendedName>
    <alternativeName>
        <fullName>SNARE-like tail-anchored protein 1</fullName>
    </alternativeName>
    <alternativeName>
        <fullName>Unconventional SNARE in the endoplasmic reticulum protein 1</fullName>
    </alternativeName>
</protein>
<reference key="1">
    <citation type="journal article" date="1997" name="Yeast">
        <title>Sequence analysis of 203 kilobases from Saccharomyces cerevisiae chromosome VII.</title>
        <authorList>
            <person name="Rieger M."/>
            <person name="Brueckner M."/>
            <person name="Schaefer M."/>
            <person name="Mueller-Auer S."/>
        </authorList>
    </citation>
    <scope>NUCLEOTIDE SEQUENCE [GENOMIC DNA]</scope>
    <source>
        <strain>ATCC 204508 / S288c</strain>
    </source>
</reference>
<reference key="2">
    <citation type="journal article" date="1997" name="Nature">
        <title>The nucleotide sequence of Saccharomyces cerevisiae chromosome VII.</title>
        <authorList>
            <person name="Tettelin H."/>
            <person name="Agostoni-Carbone M.L."/>
            <person name="Albermann K."/>
            <person name="Albers M."/>
            <person name="Arroyo J."/>
            <person name="Backes U."/>
            <person name="Barreiros T."/>
            <person name="Bertani I."/>
            <person name="Bjourson A.J."/>
            <person name="Brueckner M."/>
            <person name="Bruschi C.V."/>
            <person name="Carignani G."/>
            <person name="Castagnoli L."/>
            <person name="Cerdan E."/>
            <person name="Clemente M.L."/>
            <person name="Coblenz A."/>
            <person name="Coglievina M."/>
            <person name="Coissac E."/>
            <person name="Defoor E."/>
            <person name="Del Bino S."/>
            <person name="Delius H."/>
            <person name="Delneri D."/>
            <person name="de Wergifosse P."/>
            <person name="Dujon B."/>
            <person name="Durand P."/>
            <person name="Entian K.-D."/>
            <person name="Eraso P."/>
            <person name="Escribano V."/>
            <person name="Fabiani L."/>
            <person name="Fartmann B."/>
            <person name="Feroli F."/>
            <person name="Feuermann M."/>
            <person name="Frontali L."/>
            <person name="Garcia-Gonzalez M."/>
            <person name="Garcia-Saez M.I."/>
            <person name="Goffeau A."/>
            <person name="Guerreiro P."/>
            <person name="Hani J."/>
            <person name="Hansen M."/>
            <person name="Hebling U."/>
            <person name="Hernandez K."/>
            <person name="Heumann K."/>
            <person name="Hilger F."/>
            <person name="Hofmann B."/>
            <person name="Indge K.J."/>
            <person name="James C.M."/>
            <person name="Klima R."/>
            <person name="Koetter P."/>
            <person name="Kramer B."/>
            <person name="Kramer W."/>
            <person name="Lauquin G."/>
            <person name="Leuther H."/>
            <person name="Louis E.J."/>
            <person name="Maillier E."/>
            <person name="Marconi A."/>
            <person name="Martegani E."/>
            <person name="Mazon M.J."/>
            <person name="Mazzoni C."/>
            <person name="McReynolds A.D.K."/>
            <person name="Melchioretto P."/>
            <person name="Mewes H.-W."/>
            <person name="Minenkova O."/>
            <person name="Mueller-Auer S."/>
            <person name="Nawrocki A."/>
            <person name="Netter P."/>
            <person name="Neu R."/>
            <person name="Nombela C."/>
            <person name="Oliver S.G."/>
            <person name="Panzeri L."/>
            <person name="Paoluzi S."/>
            <person name="Plevani P."/>
            <person name="Portetelle D."/>
            <person name="Portillo F."/>
            <person name="Potier S."/>
            <person name="Purnelle B."/>
            <person name="Rieger M."/>
            <person name="Riles L."/>
            <person name="Rinaldi T."/>
            <person name="Robben J."/>
            <person name="Rodrigues-Pousada C."/>
            <person name="Rodriguez-Belmonte E."/>
            <person name="Rodriguez-Torres A.M."/>
            <person name="Rose M."/>
            <person name="Ruzzi M."/>
            <person name="Saliola M."/>
            <person name="Sanchez-Perez M."/>
            <person name="Schaefer B."/>
            <person name="Schaefer M."/>
            <person name="Scharfe M."/>
            <person name="Schmidheini T."/>
            <person name="Schreer A."/>
            <person name="Skala J."/>
            <person name="Souciet J.-L."/>
            <person name="Steensma H.Y."/>
            <person name="Talla E."/>
            <person name="Thierry A."/>
            <person name="Vandenbol M."/>
            <person name="van der Aart Q.J.M."/>
            <person name="Van Dyck L."/>
            <person name="Vanoni M."/>
            <person name="Verhasselt P."/>
            <person name="Voet M."/>
            <person name="Volckaert G."/>
            <person name="Wambutt R."/>
            <person name="Watson M.D."/>
            <person name="Weber N."/>
            <person name="Wedler E."/>
            <person name="Wedler H."/>
            <person name="Wipfli P."/>
            <person name="Wolf K."/>
            <person name="Wright L.F."/>
            <person name="Zaccaria P."/>
            <person name="Zimmermann M."/>
            <person name="Zollner A."/>
            <person name="Kleine K."/>
        </authorList>
    </citation>
    <scope>NUCLEOTIDE SEQUENCE [LARGE SCALE GENOMIC DNA]</scope>
    <source>
        <strain>ATCC 204508 / S288c</strain>
    </source>
</reference>
<reference key="3">
    <citation type="journal article" date="2014" name="G3 (Bethesda)">
        <title>The reference genome sequence of Saccharomyces cerevisiae: Then and now.</title>
        <authorList>
            <person name="Engel S.R."/>
            <person name="Dietrich F.S."/>
            <person name="Fisk D.G."/>
            <person name="Binkley G."/>
            <person name="Balakrishnan R."/>
            <person name="Costanzo M.C."/>
            <person name="Dwight S.S."/>
            <person name="Hitz B.C."/>
            <person name="Karra K."/>
            <person name="Nash R.S."/>
            <person name="Weng S."/>
            <person name="Wong E.D."/>
            <person name="Lloyd P."/>
            <person name="Skrzypek M.S."/>
            <person name="Miyasato S.R."/>
            <person name="Simison M."/>
            <person name="Cherry J.M."/>
        </authorList>
    </citation>
    <scope>GENOME REANNOTATION</scope>
    <source>
        <strain>ATCC 204508 / S288c</strain>
    </source>
</reference>
<reference key="4">
    <citation type="journal article" date="2007" name="Genome Res.">
        <title>Approaching a complete repository of sequence-verified protein-encoding clones for Saccharomyces cerevisiae.</title>
        <authorList>
            <person name="Hu Y."/>
            <person name="Rolfs A."/>
            <person name="Bhullar B."/>
            <person name="Murthy T.V.S."/>
            <person name="Zhu C."/>
            <person name="Berger M.F."/>
            <person name="Camargo A.A."/>
            <person name="Kelley F."/>
            <person name="McCarron S."/>
            <person name="Jepson D."/>
            <person name="Richardson A."/>
            <person name="Raphael J."/>
            <person name="Moreira D."/>
            <person name="Taycher E."/>
            <person name="Zuo D."/>
            <person name="Mohr S."/>
            <person name="Kane M.F."/>
            <person name="Williamson J."/>
            <person name="Simpson A.J.G."/>
            <person name="Bulyk M.L."/>
            <person name="Harlow E."/>
            <person name="Marsischky G."/>
            <person name="Kolodner R.D."/>
            <person name="LaBaer J."/>
        </authorList>
    </citation>
    <scope>NUCLEOTIDE SEQUENCE [GENOMIC DNA]</scope>
    <source>
        <strain>ATCC 204508 / S288c</strain>
    </source>
</reference>
<reference key="5">
    <citation type="journal article" date="2003" name="EMBO J.">
        <title>Use1p is a yeast SNARE protein required for retrograde traffic to the ER.</title>
        <authorList>
            <person name="Dilcher M."/>
            <person name="Veith B."/>
            <person name="Chidambaram S."/>
            <person name="Hartmann E."/>
            <person name="Schmitt H.D."/>
            <person name="Fischer von Mollard G."/>
        </authorList>
    </citation>
    <scope>FUNCTION</scope>
    <scope>SUBCELLULAR LOCATION</scope>
    <scope>INTERACTION WITH SEC20; SEC22 AND UFE1</scope>
    <scope>MUTAGENESIS OF ASP-183</scope>
</reference>
<reference key="6">
    <citation type="journal article" date="2003" name="Nature">
        <title>Global analysis of protein localization in budding yeast.</title>
        <authorList>
            <person name="Huh W.-K."/>
            <person name="Falvo J.V."/>
            <person name="Gerke L.C."/>
            <person name="Carroll A.S."/>
            <person name="Howson R.W."/>
            <person name="Weissman J.S."/>
            <person name="O'Shea E.K."/>
        </authorList>
    </citation>
    <scope>SUBCELLULAR LOCATION [LARGE SCALE ANALYSIS]</scope>
</reference>
<reference key="7">
    <citation type="journal article" date="2003" name="Nature">
        <title>Global analysis of protein expression in yeast.</title>
        <authorList>
            <person name="Ghaemmaghami S."/>
            <person name="Huh W.-K."/>
            <person name="Bower K."/>
            <person name="Howson R.W."/>
            <person name="Belle A."/>
            <person name="Dephoure N."/>
            <person name="O'Shea E.K."/>
            <person name="Weissman J.S."/>
        </authorList>
    </citation>
    <scope>LEVEL OF PROTEIN EXPRESSION [LARGE SCALE ANALYSIS]</scope>
</reference>
<reference key="8">
    <citation type="journal article" date="2003" name="Proc. Natl. Acad. Sci. U.S.A.">
        <title>A SNARE required for retrograde transport to the endoplasmic reticulum.</title>
        <authorList>
            <person name="Burri L."/>
            <person name="Varlamov O."/>
            <person name="Doege C.A."/>
            <person name="Hofmann K."/>
            <person name="Beilharz T."/>
            <person name="Rothman J.E."/>
            <person name="Soellner T.H."/>
            <person name="Lithgow T."/>
        </authorList>
    </citation>
    <scope>FUNCTION</scope>
    <scope>SUBCELLULAR LOCATION</scope>
    <scope>MEMBRANE TOPOLOGY</scope>
    <scope>IDENTIFICATION IN A COMPLEX WITH UFE1; SEC22 AND YKT6</scope>
</reference>
<reference key="9">
    <citation type="journal article" date="2003" name="Traffic">
        <title>Yeast functional analysis: identification of two essential genes involved in ER to Golgi trafficking.</title>
        <authorList>
            <person name="Belgareh-Touze N."/>
            <person name="Corral-Debrinski M."/>
            <person name="Launhardt H."/>
            <person name="Galan J.-M."/>
            <person name="Munder T."/>
            <person name="Le Panse S."/>
            <person name="Haguenauer-Tsapis R."/>
        </authorList>
    </citation>
    <scope>FUNCTION</scope>
</reference>
<reference key="10">
    <citation type="journal article" date="2004" name="Yeast">
        <title>Screening for novel essential genes of Saccharomyces cerevisiae involved in protein secretion.</title>
        <authorList>
            <person name="Davydenko S.G."/>
            <person name="Juselius J.K."/>
            <person name="Munder T."/>
            <person name="Bogengruber E."/>
            <person name="Jaentti J."/>
            <person name="Keraenen S."/>
        </authorList>
    </citation>
    <scope>FUNCTION</scope>
</reference>
<reference key="11">
    <citation type="journal article" date="2009" name="Science">
        <title>Global analysis of Cdk1 substrate phosphorylation sites provides insights into evolution.</title>
        <authorList>
            <person name="Holt L.J."/>
            <person name="Tuch B.B."/>
            <person name="Villen J."/>
            <person name="Johnson A.D."/>
            <person name="Gygi S.P."/>
            <person name="Morgan D.O."/>
        </authorList>
    </citation>
    <scope>IDENTIFICATION BY MASS SPECTROMETRY [LARGE SCALE ANALYSIS]</scope>
</reference>
<dbReference type="EMBL" id="Z72620">
    <property type="protein sequence ID" value="CAA96804.1"/>
    <property type="molecule type" value="Genomic_DNA"/>
</dbReference>
<dbReference type="EMBL" id="AY557814">
    <property type="protein sequence ID" value="AAS56140.1"/>
    <property type="molecule type" value="Genomic_DNA"/>
</dbReference>
<dbReference type="EMBL" id="BK006941">
    <property type="protein sequence ID" value="DAA08008.1"/>
    <property type="molecule type" value="Genomic_DNA"/>
</dbReference>
<dbReference type="PIR" id="S64105">
    <property type="entry name" value="S64105"/>
</dbReference>
<dbReference type="RefSeq" id="NP_011417.1">
    <property type="nucleotide sequence ID" value="NM_001180963.1"/>
</dbReference>
<dbReference type="PDB" id="8EKI">
    <property type="method" value="EM"/>
    <property type="resolution" value="4.50 A"/>
    <property type="chains" value="B=1-212"/>
</dbReference>
<dbReference type="PDBsum" id="8EKI"/>
<dbReference type="EMDB" id="EMD-28204"/>
<dbReference type="SMR" id="P53146"/>
<dbReference type="BioGRID" id="33151">
    <property type="interactions" value="289"/>
</dbReference>
<dbReference type="ComplexPortal" id="CPX-5304">
    <property type="entry name" value="Endoplasmic reticulum snare complex UFE1-USE1-SEC20-SEC22"/>
</dbReference>
<dbReference type="DIP" id="DIP-5478N"/>
<dbReference type="FunCoup" id="P53146">
    <property type="interactions" value="183"/>
</dbReference>
<dbReference type="IntAct" id="P53146">
    <property type="interactions" value="12"/>
</dbReference>
<dbReference type="STRING" id="4932.YGL098W"/>
<dbReference type="iPTMnet" id="P53146"/>
<dbReference type="PaxDb" id="4932-YGL098W"/>
<dbReference type="PeptideAtlas" id="P53146"/>
<dbReference type="EnsemblFungi" id="YGL098W_mRNA">
    <property type="protein sequence ID" value="YGL098W"/>
    <property type="gene ID" value="YGL098W"/>
</dbReference>
<dbReference type="GeneID" id="852780"/>
<dbReference type="KEGG" id="sce:YGL098W"/>
<dbReference type="AGR" id="SGD:S000003066"/>
<dbReference type="SGD" id="S000003066">
    <property type="gene designation" value="USE1"/>
</dbReference>
<dbReference type="VEuPathDB" id="FungiDB:YGL098W"/>
<dbReference type="eggNOG" id="KOG2678">
    <property type="taxonomic scope" value="Eukaryota"/>
</dbReference>
<dbReference type="HOGENOM" id="CLU_093583_0_0_1"/>
<dbReference type="InParanoid" id="P53146"/>
<dbReference type="OMA" id="GANAFND"/>
<dbReference type="OrthoDB" id="4008582at2759"/>
<dbReference type="BioCyc" id="YEAST:G3O-30598-MONOMER"/>
<dbReference type="Reactome" id="R-SCE-6811434">
    <property type="pathway name" value="COPI-dependent Golgi-to-ER retrograde traffic"/>
</dbReference>
<dbReference type="BioGRID-ORCS" id="852780">
    <property type="hits" value="8 hits in 10 CRISPR screens"/>
</dbReference>
<dbReference type="PRO" id="PR:P53146"/>
<dbReference type="Proteomes" id="UP000002311">
    <property type="component" value="Chromosome VII"/>
</dbReference>
<dbReference type="RNAct" id="P53146">
    <property type="molecule type" value="protein"/>
</dbReference>
<dbReference type="GO" id="GO:0098554">
    <property type="term" value="C:cytoplasmic side of endoplasmic reticulum membrane"/>
    <property type="evidence" value="ECO:0000314"/>
    <property type="project" value="SGD"/>
</dbReference>
<dbReference type="GO" id="GO:0005783">
    <property type="term" value="C:endoplasmic reticulum"/>
    <property type="evidence" value="ECO:0007005"/>
    <property type="project" value="SGD"/>
</dbReference>
<dbReference type="GO" id="GO:0012508">
    <property type="term" value="C:Golgi to ER transport vesicle membrane"/>
    <property type="evidence" value="ECO:0000303"/>
    <property type="project" value="ComplexPortal"/>
</dbReference>
<dbReference type="GO" id="GO:0031201">
    <property type="term" value="C:SNARE complex"/>
    <property type="evidence" value="ECO:0000314"/>
    <property type="project" value="SGD"/>
</dbReference>
<dbReference type="GO" id="GO:0005484">
    <property type="term" value="F:SNAP receptor activity"/>
    <property type="evidence" value="ECO:0000315"/>
    <property type="project" value="SGD"/>
</dbReference>
<dbReference type="GO" id="GO:0015031">
    <property type="term" value="P:protein transport"/>
    <property type="evidence" value="ECO:0007669"/>
    <property type="project" value="UniProtKB-KW"/>
</dbReference>
<dbReference type="GO" id="GO:0006890">
    <property type="term" value="P:retrograde vesicle-mediated transport, Golgi to endoplasmic reticulum"/>
    <property type="evidence" value="ECO:0000315"/>
    <property type="project" value="SGD"/>
</dbReference>
<dbReference type="GO" id="GO:0048279">
    <property type="term" value="P:vesicle fusion with endoplasmic reticulum"/>
    <property type="evidence" value="ECO:0000303"/>
    <property type="project" value="ComplexPortal"/>
</dbReference>
<dbReference type="CDD" id="cd15860">
    <property type="entry name" value="SNARE_USE1"/>
    <property type="match status" value="1"/>
</dbReference>
<dbReference type="InterPro" id="IPR019150">
    <property type="entry name" value="Vesicle_transport_protein_Use1"/>
</dbReference>
<dbReference type="PANTHER" id="PTHR13050">
    <property type="entry name" value="USE1-LIKE PROTEIN"/>
    <property type="match status" value="1"/>
</dbReference>
<dbReference type="PANTHER" id="PTHR13050:SF7">
    <property type="entry name" value="VESICLE TRANSPORT PROTEIN USE1"/>
    <property type="match status" value="1"/>
</dbReference>
<dbReference type="Pfam" id="PF09753">
    <property type="entry name" value="Use1"/>
    <property type="match status" value="1"/>
</dbReference>
<accession>P53146</accession>
<accession>D6VU47</accession>
<gene>
    <name type="primary">USE1</name>
    <name type="synonym">SLT1</name>
    <name type="ordered locus">YGL098W</name>
</gene>
<evidence type="ECO:0000255" key="1"/>
<evidence type="ECO:0000269" key="2">
    <source>
    </source>
</evidence>
<evidence type="ECO:0000269" key="3">
    <source>
    </source>
</evidence>
<evidence type="ECO:0000269" key="4">
    <source>
    </source>
</evidence>
<evidence type="ECO:0000269" key="5">
    <source>
    </source>
</evidence>
<evidence type="ECO:0000269" key="6">
    <source>
    </source>
</evidence>
<evidence type="ECO:0000269" key="7">
    <source>
    </source>
</evidence>
<evidence type="ECO:0000305" key="8"/>
<keyword id="KW-0002">3D-structure</keyword>
<keyword id="KW-0256">Endoplasmic reticulum</keyword>
<keyword id="KW-0931">ER-Golgi transport</keyword>
<keyword id="KW-0472">Membrane</keyword>
<keyword id="KW-0653">Protein transport</keyword>
<keyword id="KW-1185">Reference proteome</keyword>
<keyword id="KW-0812">Transmembrane</keyword>
<keyword id="KW-1133">Transmembrane helix</keyword>
<keyword id="KW-0813">Transport</keyword>